<accession>B7M075</accession>
<organism>
    <name type="scientific">Escherichia coli O8 (strain IAI1)</name>
    <dbReference type="NCBI Taxonomy" id="585034"/>
    <lineage>
        <taxon>Bacteria</taxon>
        <taxon>Pseudomonadati</taxon>
        <taxon>Pseudomonadota</taxon>
        <taxon>Gammaproteobacteria</taxon>
        <taxon>Enterobacterales</taxon>
        <taxon>Enterobacteriaceae</taxon>
        <taxon>Escherichia</taxon>
    </lineage>
</organism>
<evidence type="ECO:0000255" key="1">
    <source>
        <dbReference type="HAMAP-Rule" id="MF_00003"/>
    </source>
</evidence>
<protein>
    <recommendedName>
        <fullName evidence="1">Ribosome-binding factor A</fullName>
    </recommendedName>
</protein>
<comment type="function">
    <text evidence="1">One of several proteins that assist in the late maturation steps of the functional core of the 30S ribosomal subunit. Associates with free 30S ribosomal subunits (but not with 30S subunits that are part of 70S ribosomes or polysomes). Required for efficient processing of 16S rRNA. May interact with the 5'-terminal helix region of 16S rRNA.</text>
</comment>
<comment type="subunit">
    <text evidence="1">Monomer. Binds 30S ribosomal subunits, but not 50S ribosomal subunits or 70S ribosomes.</text>
</comment>
<comment type="subcellular location">
    <subcellularLocation>
        <location evidence="1">Cytoplasm</location>
    </subcellularLocation>
</comment>
<comment type="similarity">
    <text evidence="1">Belongs to the RbfA family.</text>
</comment>
<gene>
    <name evidence="1" type="primary">rbfA</name>
    <name type="ordered locus">ECIAI1_3317</name>
</gene>
<keyword id="KW-0963">Cytoplasm</keyword>
<keyword id="KW-0690">Ribosome biogenesis</keyword>
<reference key="1">
    <citation type="journal article" date="2009" name="PLoS Genet.">
        <title>Organised genome dynamics in the Escherichia coli species results in highly diverse adaptive paths.</title>
        <authorList>
            <person name="Touchon M."/>
            <person name="Hoede C."/>
            <person name="Tenaillon O."/>
            <person name="Barbe V."/>
            <person name="Baeriswyl S."/>
            <person name="Bidet P."/>
            <person name="Bingen E."/>
            <person name="Bonacorsi S."/>
            <person name="Bouchier C."/>
            <person name="Bouvet O."/>
            <person name="Calteau A."/>
            <person name="Chiapello H."/>
            <person name="Clermont O."/>
            <person name="Cruveiller S."/>
            <person name="Danchin A."/>
            <person name="Diard M."/>
            <person name="Dossat C."/>
            <person name="Karoui M.E."/>
            <person name="Frapy E."/>
            <person name="Garry L."/>
            <person name="Ghigo J.M."/>
            <person name="Gilles A.M."/>
            <person name="Johnson J."/>
            <person name="Le Bouguenec C."/>
            <person name="Lescat M."/>
            <person name="Mangenot S."/>
            <person name="Martinez-Jehanne V."/>
            <person name="Matic I."/>
            <person name="Nassif X."/>
            <person name="Oztas S."/>
            <person name="Petit M.A."/>
            <person name="Pichon C."/>
            <person name="Rouy Z."/>
            <person name="Ruf C.S."/>
            <person name="Schneider D."/>
            <person name="Tourret J."/>
            <person name="Vacherie B."/>
            <person name="Vallenet D."/>
            <person name="Medigue C."/>
            <person name="Rocha E.P.C."/>
            <person name="Denamur E."/>
        </authorList>
    </citation>
    <scope>NUCLEOTIDE SEQUENCE [LARGE SCALE GENOMIC DNA]</scope>
    <source>
        <strain>IAI1</strain>
    </source>
</reference>
<dbReference type="EMBL" id="CU928160">
    <property type="protein sequence ID" value="CAR00131.1"/>
    <property type="molecule type" value="Genomic_DNA"/>
</dbReference>
<dbReference type="RefSeq" id="WP_001040205.1">
    <property type="nucleotide sequence ID" value="NC_011741.1"/>
</dbReference>
<dbReference type="SMR" id="B7M075"/>
<dbReference type="GeneID" id="93778816"/>
<dbReference type="KEGG" id="ecr:ECIAI1_3317"/>
<dbReference type="HOGENOM" id="CLU_089475_5_0_6"/>
<dbReference type="GO" id="GO:0005829">
    <property type="term" value="C:cytosol"/>
    <property type="evidence" value="ECO:0007669"/>
    <property type="project" value="TreeGrafter"/>
</dbReference>
<dbReference type="GO" id="GO:0043024">
    <property type="term" value="F:ribosomal small subunit binding"/>
    <property type="evidence" value="ECO:0007669"/>
    <property type="project" value="TreeGrafter"/>
</dbReference>
<dbReference type="GO" id="GO:0030490">
    <property type="term" value="P:maturation of SSU-rRNA"/>
    <property type="evidence" value="ECO:0007669"/>
    <property type="project" value="UniProtKB-UniRule"/>
</dbReference>
<dbReference type="FunFam" id="3.30.300.20:FF:000007">
    <property type="entry name" value="Ribosome-binding factor A"/>
    <property type="match status" value="1"/>
</dbReference>
<dbReference type="Gene3D" id="3.30.300.20">
    <property type="match status" value="1"/>
</dbReference>
<dbReference type="HAMAP" id="MF_00003">
    <property type="entry name" value="RbfA"/>
    <property type="match status" value="1"/>
</dbReference>
<dbReference type="InterPro" id="IPR015946">
    <property type="entry name" value="KH_dom-like_a/b"/>
</dbReference>
<dbReference type="InterPro" id="IPR000238">
    <property type="entry name" value="RbfA"/>
</dbReference>
<dbReference type="InterPro" id="IPR023799">
    <property type="entry name" value="RbfA_dom_sf"/>
</dbReference>
<dbReference type="InterPro" id="IPR020053">
    <property type="entry name" value="Ribosome-bd_factorA_CS"/>
</dbReference>
<dbReference type="NCBIfam" id="TIGR00082">
    <property type="entry name" value="rbfA"/>
    <property type="match status" value="1"/>
</dbReference>
<dbReference type="PANTHER" id="PTHR33515">
    <property type="entry name" value="RIBOSOME-BINDING FACTOR A, CHLOROPLASTIC-RELATED"/>
    <property type="match status" value="1"/>
</dbReference>
<dbReference type="PANTHER" id="PTHR33515:SF1">
    <property type="entry name" value="RIBOSOME-BINDING FACTOR A, CHLOROPLASTIC-RELATED"/>
    <property type="match status" value="1"/>
</dbReference>
<dbReference type="Pfam" id="PF02033">
    <property type="entry name" value="RBFA"/>
    <property type="match status" value="1"/>
</dbReference>
<dbReference type="SUPFAM" id="SSF89919">
    <property type="entry name" value="Ribosome-binding factor A, RbfA"/>
    <property type="match status" value="1"/>
</dbReference>
<dbReference type="PROSITE" id="PS01319">
    <property type="entry name" value="RBFA"/>
    <property type="match status" value="1"/>
</dbReference>
<feature type="chain" id="PRO_1000193258" description="Ribosome-binding factor A">
    <location>
        <begin position="1"/>
        <end position="133"/>
    </location>
</feature>
<sequence length="133" mass="15154">MAKEFGRPQRVAQEMQKEIALILQREIKDPRLGMMTTVSGVEMSRDLAYAKVYVTFLNDKDEDAVKAGIKALQEASGFIRSLLGKAMRLRIVPELTFFYDNSLVEGMRMSNLVTSVVKHDEERRVNPDDSKED</sequence>
<name>RBFA_ECO8A</name>
<proteinExistence type="inferred from homology"/>